<protein>
    <recommendedName>
        <fullName>Translation initiation factor IF-2</fullName>
    </recommendedName>
</protein>
<accession>Q9ZF31</accession>
<accession>Q9RIL8</accession>
<evidence type="ECO:0000250" key="1"/>
<evidence type="ECO:0000256" key="2">
    <source>
        <dbReference type="SAM" id="MobiDB-lite"/>
    </source>
</evidence>
<evidence type="ECO:0000305" key="3"/>
<keyword id="KW-0024">Alternative initiation</keyword>
<keyword id="KW-0963">Cytoplasm</keyword>
<keyword id="KW-0342">GTP-binding</keyword>
<keyword id="KW-0396">Initiation factor</keyword>
<keyword id="KW-0547">Nucleotide-binding</keyword>
<keyword id="KW-0648">Protein biosynthesis</keyword>
<keyword id="KW-1185">Reference proteome</keyword>
<comment type="function">
    <text evidence="1">One of the essential components for the initiation of protein synthesis. Protects formylmethionyl-tRNA from spontaneous hydrolysis and promotes its binding to the 30S ribosomal subunits. Also involved in the hydrolysis of GTP during the formation of the 70S ribosomal complex (By similarity).</text>
</comment>
<comment type="subcellular location">
    <subcellularLocation>
        <location evidence="1">Cytoplasm</location>
    </subcellularLocation>
</comment>
<comment type="alternative products">
    <event type="alternative initiation"/>
    <isoform>
        <id>Q9ZF31-1</id>
        <name>Alpha</name>
        <sequence type="displayed"/>
    </isoform>
    <isoform>
        <id>Q9ZF31-2</id>
        <name>Beta</name>
        <sequence type="described" ref="VSP_018767 VSP_018768"/>
    </isoform>
    <isoform>
        <id>Q9ZF31-3</id>
        <name>Gamma</name>
        <sequence type="described" ref="VSP_018766"/>
    </isoform>
</comment>
<comment type="similarity">
    <text evidence="3">Belongs to the TRAFAC class translation factor GTPase superfamily. Classic translation factor GTPase family. IF-2 subfamily.</text>
</comment>
<sequence length="892" mass="97402">MTDVTLKALAAERQVSVDRLVQQFADAGIRKSADDSVSAQEKQTLLAHLNREAVSGPDKLTLQRKTRSTLNIPGTGGKSKSVQIEVRKKRTFVKRDPQEAERLAAEEQAQREAEEQARREAEEQAKREAQQKAEREAAEQAKREAAEKAKREAAEKDKVSNQQTDDMTKTAQAEKARRENEAAELKRKAEEEARRKLEEEARRVAEEARRMAEENKWTATPEPVEDTSDYHVTTSQHARQAEDENDREVEGGRGRGRNAKAARPAKKGKHAESKADREEARAAVRGGKGGKRKGSSLQQGFQKPAQAVNRDVVIGETITVGELANKMAVKGSQVIKAMMKLGAMATINQVIDQETAQLVAEEMGHKVILRRENELEEAVMSDRDTGAAAEPRAPVVTIMGHVDHGKTSLLDYIRSTKVASGEAGGITQHIGAYHVETDNGMITFLDTPGHAAFTSMRARGAQATDIVVLVVAADDGVMPQTIEAIQHAKAAGVPVVVAVNKIDKPEADPDRVKNELSQYGILPEEWGGESQFVHVSAKAGTGIDELLDAILLQAEVLELKAVRKGMASGAVIESFLDKGRGPVATVLVREGTLHKGDIVLCGFEYGRVRAMRNELGQEVLEAGPSIPVEILGLSGVPAAGDEVTVVRDEKKAREVALYRQGKFREVKLARQQKSKLENMFANMTEGEVHEVNIVLKADVQGSVEAISDSLLKLSTDEVKVKIIGSGVGGITETDATLAAASNAILVGFNVRADASARKVIESESLDLRYYSVIYNLIDEVKAAMSGMLSPELKQQIIGLAEVRDVFKSPKFGAIAGCMVTEGTIKRHNPIRVLRDNVVIYEGELESLRRFKDDVNEVRNGMECGIGVKNYNDVRVGDMIEVFEIIEIQRTIA</sequence>
<dbReference type="EMBL" id="AJ002552">
    <property type="protein sequence ID" value="CAA05549.1"/>
    <property type="molecule type" value="Genomic_DNA"/>
</dbReference>
<dbReference type="EMBL" id="AJ002552">
    <property type="protein sequence ID" value="CAA05550.1"/>
    <property type="molecule type" value="Genomic_DNA"/>
</dbReference>
<dbReference type="EMBL" id="AJ002552">
    <property type="protein sequence ID" value="CAA05551.1"/>
    <property type="molecule type" value="Genomic_DNA"/>
</dbReference>
<dbReference type="EMBL" id="AE006468">
    <property type="protein sequence ID" value="AAL22158.1"/>
    <property type="molecule type" value="Genomic_DNA"/>
</dbReference>
<dbReference type="EMBL" id="AJ227976">
    <property type="protein sequence ID" value="CAA12747.1"/>
    <property type="molecule type" value="Genomic_DNA"/>
</dbReference>
<dbReference type="RefSeq" id="NP_462199.1">
    <molecule id="Q9ZF31-1"/>
    <property type="nucleotide sequence ID" value="NC_003197.2"/>
</dbReference>
<dbReference type="RefSeq" id="WP_000133064.1">
    <property type="nucleotide sequence ID" value="NC_003197.2"/>
</dbReference>
<dbReference type="SMR" id="Q9ZF31"/>
<dbReference type="STRING" id="99287.STM3286"/>
<dbReference type="PaxDb" id="99287-STM3286"/>
<dbReference type="GeneID" id="1254809"/>
<dbReference type="KEGG" id="stm:STM3286"/>
<dbReference type="PATRIC" id="fig|99287.12.peg.3485"/>
<dbReference type="HOGENOM" id="CLU_006301_6_3_6"/>
<dbReference type="OMA" id="RKNPWMN"/>
<dbReference type="PhylomeDB" id="Q9ZF31"/>
<dbReference type="BioCyc" id="SENT99287:STM3286-MONOMER"/>
<dbReference type="Proteomes" id="UP000001014">
    <property type="component" value="Chromosome"/>
</dbReference>
<dbReference type="GO" id="GO:0005737">
    <property type="term" value="C:cytoplasm"/>
    <property type="evidence" value="ECO:0000318"/>
    <property type="project" value="GO_Central"/>
</dbReference>
<dbReference type="GO" id="GO:0005829">
    <property type="term" value="C:cytosol"/>
    <property type="evidence" value="ECO:0000318"/>
    <property type="project" value="GO_Central"/>
</dbReference>
<dbReference type="GO" id="GO:0005525">
    <property type="term" value="F:GTP binding"/>
    <property type="evidence" value="ECO:0007669"/>
    <property type="project" value="UniProtKB-KW"/>
</dbReference>
<dbReference type="GO" id="GO:0003924">
    <property type="term" value="F:GTPase activity"/>
    <property type="evidence" value="ECO:0007669"/>
    <property type="project" value="UniProtKB-UniRule"/>
</dbReference>
<dbReference type="GO" id="GO:0097216">
    <property type="term" value="F:guanosine tetraphosphate binding"/>
    <property type="evidence" value="ECO:0007669"/>
    <property type="project" value="UniProtKB-ARBA"/>
</dbReference>
<dbReference type="GO" id="GO:0003743">
    <property type="term" value="F:translation initiation factor activity"/>
    <property type="evidence" value="ECO:0000318"/>
    <property type="project" value="GO_Central"/>
</dbReference>
<dbReference type="GO" id="GO:0006413">
    <property type="term" value="P:translational initiation"/>
    <property type="evidence" value="ECO:0000318"/>
    <property type="project" value="GO_Central"/>
</dbReference>
<dbReference type="CDD" id="cd01887">
    <property type="entry name" value="IF2_eIF5B"/>
    <property type="match status" value="1"/>
</dbReference>
<dbReference type="CDD" id="cd03702">
    <property type="entry name" value="IF2_mtIF2_II"/>
    <property type="match status" value="1"/>
</dbReference>
<dbReference type="CDD" id="cd03692">
    <property type="entry name" value="mtIF2_IVc"/>
    <property type="match status" value="1"/>
</dbReference>
<dbReference type="FunFam" id="2.40.30.10:FF:000007">
    <property type="entry name" value="Translation initiation factor IF-2"/>
    <property type="match status" value="1"/>
</dbReference>
<dbReference type="FunFam" id="2.40.30.10:FF:000008">
    <property type="entry name" value="Translation initiation factor IF-2"/>
    <property type="match status" value="1"/>
</dbReference>
<dbReference type="FunFam" id="3.30.56.50:FF:000001">
    <property type="entry name" value="Translation initiation factor IF-2"/>
    <property type="match status" value="1"/>
</dbReference>
<dbReference type="FunFam" id="3.40.50.10050:FF:000001">
    <property type="entry name" value="Translation initiation factor IF-2"/>
    <property type="match status" value="1"/>
</dbReference>
<dbReference type="FunFam" id="3.40.50.300:FF:000019">
    <property type="entry name" value="Translation initiation factor IF-2"/>
    <property type="match status" value="1"/>
</dbReference>
<dbReference type="Gene3D" id="3.40.50.300">
    <property type="entry name" value="P-loop containing nucleotide triphosphate hydrolases"/>
    <property type="match status" value="1"/>
</dbReference>
<dbReference type="Gene3D" id="3.30.56.50">
    <property type="entry name" value="Putative DNA-binding domain, N-terminal subdomain of bacterial translation initiation factor IF2"/>
    <property type="match status" value="1"/>
</dbReference>
<dbReference type="Gene3D" id="2.40.30.10">
    <property type="entry name" value="Translation factors"/>
    <property type="match status" value="2"/>
</dbReference>
<dbReference type="Gene3D" id="3.40.50.10050">
    <property type="entry name" value="Translation initiation factor IF- 2, domain 3"/>
    <property type="match status" value="1"/>
</dbReference>
<dbReference type="HAMAP" id="MF_00100_B">
    <property type="entry name" value="IF_2_B"/>
    <property type="match status" value="1"/>
</dbReference>
<dbReference type="InterPro" id="IPR009061">
    <property type="entry name" value="DNA-bd_dom_put_sf"/>
</dbReference>
<dbReference type="InterPro" id="IPR053905">
    <property type="entry name" value="EF-G-like_DII"/>
</dbReference>
<dbReference type="InterPro" id="IPR004161">
    <property type="entry name" value="EFTu-like_2"/>
</dbReference>
<dbReference type="InterPro" id="IPR013575">
    <property type="entry name" value="IF2_assoc_dom_bac"/>
</dbReference>
<dbReference type="InterPro" id="IPR044145">
    <property type="entry name" value="IF2_II"/>
</dbReference>
<dbReference type="InterPro" id="IPR006847">
    <property type="entry name" value="IF2_N"/>
</dbReference>
<dbReference type="InterPro" id="IPR027417">
    <property type="entry name" value="P-loop_NTPase"/>
</dbReference>
<dbReference type="InterPro" id="IPR005225">
    <property type="entry name" value="Small_GTP-bd"/>
</dbReference>
<dbReference type="InterPro" id="IPR000795">
    <property type="entry name" value="T_Tr_GTP-bd_dom"/>
</dbReference>
<dbReference type="InterPro" id="IPR000178">
    <property type="entry name" value="TF_IF2_bacterial-like"/>
</dbReference>
<dbReference type="InterPro" id="IPR015760">
    <property type="entry name" value="TIF_IF2"/>
</dbReference>
<dbReference type="InterPro" id="IPR023115">
    <property type="entry name" value="TIF_IF2_dom3"/>
</dbReference>
<dbReference type="InterPro" id="IPR036925">
    <property type="entry name" value="TIF_IF2_dom3_sf"/>
</dbReference>
<dbReference type="InterPro" id="IPR009000">
    <property type="entry name" value="Transl_B-barrel_sf"/>
</dbReference>
<dbReference type="NCBIfam" id="TIGR00487">
    <property type="entry name" value="IF-2"/>
    <property type="match status" value="1"/>
</dbReference>
<dbReference type="NCBIfam" id="TIGR00231">
    <property type="entry name" value="small_GTP"/>
    <property type="match status" value="1"/>
</dbReference>
<dbReference type="PANTHER" id="PTHR43381:SF5">
    <property type="entry name" value="TR-TYPE G DOMAIN-CONTAINING PROTEIN"/>
    <property type="match status" value="1"/>
</dbReference>
<dbReference type="PANTHER" id="PTHR43381">
    <property type="entry name" value="TRANSLATION INITIATION FACTOR IF-2-RELATED"/>
    <property type="match status" value="1"/>
</dbReference>
<dbReference type="Pfam" id="PF22042">
    <property type="entry name" value="EF-G_D2"/>
    <property type="match status" value="1"/>
</dbReference>
<dbReference type="Pfam" id="PF00009">
    <property type="entry name" value="GTP_EFTU"/>
    <property type="match status" value="1"/>
</dbReference>
<dbReference type="Pfam" id="PF03144">
    <property type="entry name" value="GTP_EFTU_D2"/>
    <property type="match status" value="1"/>
</dbReference>
<dbReference type="Pfam" id="PF11987">
    <property type="entry name" value="IF-2"/>
    <property type="match status" value="1"/>
</dbReference>
<dbReference type="Pfam" id="PF08364">
    <property type="entry name" value="IF2_assoc"/>
    <property type="match status" value="1"/>
</dbReference>
<dbReference type="Pfam" id="PF04760">
    <property type="entry name" value="IF2_N"/>
    <property type="match status" value="2"/>
</dbReference>
<dbReference type="SUPFAM" id="SSF52156">
    <property type="entry name" value="Initiation factor IF2/eIF5b, domain 3"/>
    <property type="match status" value="1"/>
</dbReference>
<dbReference type="SUPFAM" id="SSF52540">
    <property type="entry name" value="P-loop containing nucleoside triphosphate hydrolases"/>
    <property type="match status" value="1"/>
</dbReference>
<dbReference type="SUPFAM" id="SSF46955">
    <property type="entry name" value="Putative DNA-binding domain"/>
    <property type="match status" value="1"/>
</dbReference>
<dbReference type="SUPFAM" id="SSF50447">
    <property type="entry name" value="Translation proteins"/>
    <property type="match status" value="2"/>
</dbReference>
<dbReference type="PROSITE" id="PS51722">
    <property type="entry name" value="G_TR_2"/>
    <property type="match status" value="1"/>
</dbReference>
<dbReference type="PROSITE" id="PS01176">
    <property type="entry name" value="IF2"/>
    <property type="match status" value="1"/>
</dbReference>
<reference key="1">
    <citation type="submission" date="1997-11" db="EMBL/GenBank/DDBJ databases">
        <title>Sequence of the infB gene from Salmonella typhimurium.</title>
        <authorList>
            <person name="Fage-Larsen J."/>
            <person name="Steffensen S.A.D.A."/>
            <person name="Hedegaard J."/>
            <person name="Olsen J.E."/>
            <person name="Mortensen K.K."/>
            <person name="Sperling-Petersen H.U."/>
        </authorList>
    </citation>
    <scope>NUCLEOTIDE SEQUENCE [GENOMIC DNA]</scope>
    <source>
        <strain>LT2</strain>
    </source>
</reference>
<reference key="2">
    <citation type="journal article" date="2001" name="Nature">
        <title>Complete genome sequence of Salmonella enterica serovar Typhimurium LT2.</title>
        <authorList>
            <person name="McClelland M."/>
            <person name="Sanderson K.E."/>
            <person name="Spieth J."/>
            <person name="Clifton S.W."/>
            <person name="Latreille P."/>
            <person name="Courtney L."/>
            <person name="Porwollik S."/>
            <person name="Ali J."/>
            <person name="Dante M."/>
            <person name="Du F."/>
            <person name="Hou S."/>
            <person name="Layman D."/>
            <person name="Leonard S."/>
            <person name="Nguyen C."/>
            <person name="Scott K."/>
            <person name="Holmes A."/>
            <person name="Grewal N."/>
            <person name="Mulvaney E."/>
            <person name="Ryan E."/>
            <person name="Sun H."/>
            <person name="Florea L."/>
            <person name="Miller W."/>
            <person name="Stoneking T."/>
            <person name="Nhan M."/>
            <person name="Waterston R."/>
            <person name="Wilson R.K."/>
        </authorList>
    </citation>
    <scope>NUCLEOTIDE SEQUENCE [LARGE SCALE GENOMIC DNA]</scope>
    <source>
        <strain>LT2 / SGSC1412 / ATCC 700720</strain>
    </source>
</reference>
<reference key="3">
    <citation type="journal article" date="1999" name="Int. J. Syst. Bacteriol.">
        <title>Identification of Enterobacteriaceae by partial sequencing of the gene encoding translation initiation factor 2.</title>
        <authorList>
            <person name="Hedegaard J."/>
            <person name="Steffensen S.A.D.A."/>
            <person name="Norskow-Lauritsen N."/>
            <person name="Mortensen K.K."/>
            <person name="Sperling-Petersen H.U."/>
        </authorList>
    </citation>
    <scope>NUCLEOTIDE SEQUENCE [GENOMIC DNA] OF 406-566</scope>
    <source>
        <strain>StyAU9601</strain>
    </source>
</reference>
<feature type="chain" id="PRO_0000014474" description="Translation initiation factor IF-2">
    <location>
        <begin position="1"/>
        <end position="892"/>
    </location>
</feature>
<feature type="domain" description="tr-type G">
    <location>
        <begin position="391"/>
        <end position="560"/>
    </location>
</feature>
<feature type="region of interest" description="Disordered" evidence="2">
    <location>
        <begin position="88"/>
        <end position="305"/>
    </location>
</feature>
<feature type="region of interest" description="G1" evidence="1">
    <location>
        <begin position="400"/>
        <end position="407"/>
    </location>
</feature>
<feature type="region of interest" description="G2" evidence="1">
    <location>
        <begin position="425"/>
        <end position="429"/>
    </location>
</feature>
<feature type="region of interest" description="G3" evidence="1">
    <location>
        <begin position="446"/>
        <end position="449"/>
    </location>
</feature>
<feature type="region of interest" description="G4" evidence="1">
    <location>
        <begin position="500"/>
        <end position="503"/>
    </location>
</feature>
<feature type="region of interest" description="G5" evidence="1">
    <location>
        <begin position="536"/>
        <end position="538"/>
    </location>
</feature>
<feature type="compositionally biased region" description="Basic and acidic residues" evidence="2">
    <location>
        <begin position="93"/>
        <end position="159"/>
    </location>
</feature>
<feature type="compositionally biased region" description="Basic and acidic residues" evidence="2">
    <location>
        <begin position="166"/>
        <end position="216"/>
    </location>
</feature>
<feature type="compositionally biased region" description="Basic residues" evidence="2">
    <location>
        <begin position="254"/>
        <end position="269"/>
    </location>
</feature>
<feature type="compositionally biased region" description="Basic and acidic residues" evidence="2">
    <location>
        <begin position="270"/>
        <end position="282"/>
    </location>
</feature>
<feature type="binding site" evidence="1">
    <location>
        <begin position="400"/>
        <end position="407"/>
    </location>
    <ligand>
        <name>GTP</name>
        <dbReference type="ChEBI" id="CHEBI:37565"/>
    </ligand>
</feature>
<feature type="binding site" evidence="1">
    <location>
        <begin position="446"/>
        <end position="450"/>
    </location>
    <ligand>
        <name>GTP</name>
        <dbReference type="ChEBI" id="CHEBI:37565"/>
    </ligand>
</feature>
<feature type="binding site" evidence="1">
    <location>
        <begin position="500"/>
        <end position="503"/>
    </location>
    <ligand>
        <name>GTP</name>
        <dbReference type="ChEBI" id="CHEBI:37565"/>
    </ligand>
</feature>
<feature type="splice variant" id="VSP_018766" description="In isoform Gamma." evidence="3">
    <location>
        <begin position="1"/>
        <end position="166"/>
    </location>
</feature>
<feature type="splice variant" id="VSP_018767" description="In isoform Beta." evidence="3">
    <location>
        <begin position="1"/>
        <end position="158"/>
    </location>
</feature>
<feature type="splice variant" id="VSP_018768" description="In isoform Beta." evidence="3">
    <original>V</original>
    <variation>M</variation>
    <location>
        <position position="159"/>
    </location>
</feature>
<feature type="sequence conflict" description="In Ref. 1; CAA05549/CAA05550/CAA05551." evidence="3" ref="1">
    <original>E</original>
    <variation>D</variation>
    <location>
        <position position="184"/>
    </location>
</feature>
<proteinExistence type="inferred from homology"/>
<name>IF2_SALTY</name>
<gene>
    <name type="primary">infB</name>
    <name type="ordered locus">STM3286</name>
</gene>
<organism>
    <name type="scientific">Salmonella typhimurium (strain LT2 / SGSC1412 / ATCC 700720)</name>
    <dbReference type="NCBI Taxonomy" id="99287"/>
    <lineage>
        <taxon>Bacteria</taxon>
        <taxon>Pseudomonadati</taxon>
        <taxon>Pseudomonadota</taxon>
        <taxon>Gammaproteobacteria</taxon>
        <taxon>Enterobacterales</taxon>
        <taxon>Enterobacteriaceae</taxon>
        <taxon>Salmonella</taxon>
    </lineage>
</organism>